<sequence>MKLDFLDFEQPIAELEAKIDELRHLDGQDMDLIKEVSALEQKSKNLTQSIFNRLSDVQVAQVARHPQRPYMLDYLKEMFTDFKEMHGDRAFADDAAIVGGLARINGQAVMVIGQEKGRDTKEKIRRNFGMPRPEGYRKALRLMKTAETFGLPVLTFIDTPGAYPGINAEERGQSEAIARNLIEMSELKVPVICTVIGEGGSGGALAIGVGDVTMMMQYSTYSVISPEGCASILWKDAANAADAASALGITAPRLKELGLVDEIVEEPLGGAHRNPSAAASSLKDAILRQLELLKNKPVDELLETRYQRYMQYGNFDVA</sequence>
<comment type="function">
    <text evidence="1">Component of the acetyl coenzyme A carboxylase (ACC) complex. First, biotin carboxylase catalyzes the carboxylation of biotin on its carrier protein (BCCP) and then the CO(2) group is transferred by the carboxyltransferase to acetyl-CoA to form malonyl-CoA.</text>
</comment>
<comment type="catalytic activity">
    <reaction evidence="1">
        <text>N(6)-carboxybiotinyl-L-lysyl-[protein] + acetyl-CoA = N(6)-biotinyl-L-lysyl-[protein] + malonyl-CoA</text>
        <dbReference type="Rhea" id="RHEA:54728"/>
        <dbReference type="Rhea" id="RHEA-COMP:10505"/>
        <dbReference type="Rhea" id="RHEA-COMP:10506"/>
        <dbReference type="ChEBI" id="CHEBI:57288"/>
        <dbReference type="ChEBI" id="CHEBI:57384"/>
        <dbReference type="ChEBI" id="CHEBI:83144"/>
        <dbReference type="ChEBI" id="CHEBI:83145"/>
        <dbReference type="EC" id="2.1.3.15"/>
    </reaction>
</comment>
<comment type="pathway">
    <text evidence="1">Lipid metabolism; malonyl-CoA biosynthesis; malonyl-CoA from acetyl-CoA: step 1/1.</text>
</comment>
<comment type="subunit">
    <text evidence="1">Acetyl-CoA carboxylase is a heterohexamer composed of biotin carboxyl carrier protein (AccB), biotin carboxylase (AccC) and two subunits each of ACCase subunit alpha (AccA) and ACCase subunit beta (AccD).</text>
</comment>
<comment type="subcellular location">
    <subcellularLocation>
        <location evidence="1">Cytoplasm</location>
    </subcellularLocation>
</comment>
<comment type="similarity">
    <text evidence="1">Belongs to the AccA family.</text>
</comment>
<organism>
    <name type="scientific">Hydrogenovibrio crunogenus (strain DSM 25203 / XCL-2)</name>
    <name type="common">Thiomicrospira crunogena</name>
    <dbReference type="NCBI Taxonomy" id="317025"/>
    <lineage>
        <taxon>Bacteria</taxon>
        <taxon>Pseudomonadati</taxon>
        <taxon>Pseudomonadota</taxon>
        <taxon>Gammaproteobacteria</taxon>
        <taxon>Thiotrichales</taxon>
        <taxon>Piscirickettsiaceae</taxon>
        <taxon>Hydrogenovibrio</taxon>
    </lineage>
</organism>
<protein>
    <recommendedName>
        <fullName evidence="1">Acetyl-coenzyme A carboxylase carboxyl transferase subunit alpha</fullName>
        <shortName evidence="1">ACCase subunit alpha</shortName>
        <shortName evidence="1">Acetyl-CoA carboxylase carboxyltransferase subunit alpha</shortName>
        <ecNumber evidence="1">2.1.3.15</ecNumber>
    </recommendedName>
</protein>
<reference key="1">
    <citation type="journal article" date="2006" name="PLoS Biol.">
        <title>The genome of deep-sea vent chemolithoautotroph Thiomicrospira crunogena XCL-2.</title>
        <authorList>
            <person name="Scott K.M."/>
            <person name="Sievert S.M."/>
            <person name="Abril F.N."/>
            <person name="Ball L.A."/>
            <person name="Barrett C.J."/>
            <person name="Blake R.A."/>
            <person name="Boller A.J."/>
            <person name="Chain P.S.G."/>
            <person name="Clark J.A."/>
            <person name="Davis C.R."/>
            <person name="Detter C."/>
            <person name="Do K.F."/>
            <person name="Dobrinski K.P."/>
            <person name="Faza B.I."/>
            <person name="Fitzpatrick K.A."/>
            <person name="Freyermuth S.K."/>
            <person name="Harmer T.L."/>
            <person name="Hauser L.J."/>
            <person name="Huegler M."/>
            <person name="Kerfeld C.A."/>
            <person name="Klotz M.G."/>
            <person name="Kong W.W."/>
            <person name="Land M."/>
            <person name="Lapidus A."/>
            <person name="Larimer F.W."/>
            <person name="Longo D.L."/>
            <person name="Lucas S."/>
            <person name="Malfatti S.A."/>
            <person name="Massey S.E."/>
            <person name="Martin D.D."/>
            <person name="McCuddin Z."/>
            <person name="Meyer F."/>
            <person name="Moore J.L."/>
            <person name="Ocampo L.H. Jr."/>
            <person name="Paul J.H."/>
            <person name="Paulsen I.T."/>
            <person name="Reep D.K."/>
            <person name="Ren Q."/>
            <person name="Ross R.L."/>
            <person name="Sato P.Y."/>
            <person name="Thomas P."/>
            <person name="Tinkham L.E."/>
            <person name="Zeruth G.T."/>
        </authorList>
    </citation>
    <scope>NUCLEOTIDE SEQUENCE [LARGE SCALE GENOMIC DNA]</scope>
    <source>
        <strain>DSM 25203 / XCL-2</strain>
    </source>
</reference>
<keyword id="KW-0067">ATP-binding</keyword>
<keyword id="KW-0963">Cytoplasm</keyword>
<keyword id="KW-0275">Fatty acid biosynthesis</keyword>
<keyword id="KW-0276">Fatty acid metabolism</keyword>
<keyword id="KW-0444">Lipid biosynthesis</keyword>
<keyword id="KW-0443">Lipid metabolism</keyword>
<keyword id="KW-0547">Nucleotide-binding</keyword>
<keyword id="KW-0808">Transferase</keyword>
<proteinExistence type="inferred from homology"/>
<feature type="chain" id="PRO_1000062694" description="Acetyl-coenzyme A carboxylase carboxyl transferase subunit alpha">
    <location>
        <begin position="1"/>
        <end position="318"/>
    </location>
</feature>
<feature type="domain" description="CoA carboxyltransferase C-terminal" evidence="2">
    <location>
        <begin position="31"/>
        <end position="292"/>
    </location>
</feature>
<evidence type="ECO:0000255" key="1">
    <source>
        <dbReference type="HAMAP-Rule" id="MF_00823"/>
    </source>
</evidence>
<evidence type="ECO:0000255" key="2">
    <source>
        <dbReference type="PROSITE-ProRule" id="PRU01137"/>
    </source>
</evidence>
<gene>
    <name evidence="1" type="primary">accA</name>
    <name type="ordered locus">Tcr_1264</name>
</gene>
<name>ACCA_HYDCU</name>
<accession>Q31G64</accession>
<dbReference type="EC" id="2.1.3.15" evidence="1"/>
<dbReference type="EMBL" id="CP000109">
    <property type="protein sequence ID" value="ABB41859.1"/>
    <property type="molecule type" value="Genomic_DNA"/>
</dbReference>
<dbReference type="SMR" id="Q31G64"/>
<dbReference type="STRING" id="317025.Tcr_1264"/>
<dbReference type="KEGG" id="tcx:Tcr_1264"/>
<dbReference type="eggNOG" id="COG0825">
    <property type="taxonomic scope" value="Bacteria"/>
</dbReference>
<dbReference type="HOGENOM" id="CLU_015486_0_2_6"/>
<dbReference type="OrthoDB" id="9808023at2"/>
<dbReference type="UniPathway" id="UPA00655">
    <property type="reaction ID" value="UER00711"/>
</dbReference>
<dbReference type="GO" id="GO:0009317">
    <property type="term" value="C:acetyl-CoA carboxylase complex"/>
    <property type="evidence" value="ECO:0007669"/>
    <property type="project" value="InterPro"/>
</dbReference>
<dbReference type="GO" id="GO:0003989">
    <property type="term" value="F:acetyl-CoA carboxylase activity"/>
    <property type="evidence" value="ECO:0007669"/>
    <property type="project" value="InterPro"/>
</dbReference>
<dbReference type="GO" id="GO:0005524">
    <property type="term" value="F:ATP binding"/>
    <property type="evidence" value="ECO:0007669"/>
    <property type="project" value="UniProtKB-KW"/>
</dbReference>
<dbReference type="GO" id="GO:0016743">
    <property type="term" value="F:carboxyl- or carbamoyltransferase activity"/>
    <property type="evidence" value="ECO:0007669"/>
    <property type="project" value="UniProtKB-UniRule"/>
</dbReference>
<dbReference type="GO" id="GO:0006633">
    <property type="term" value="P:fatty acid biosynthetic process"/>
    <property type="evidence" value="ECO:0007669"/>
    <property type="project" value="UniProtKB-KW"/>
</dbReference>
<dbReference type="GO" id="GO:2001295">
    <property type="term" value="P:malonyl-CoA biosynthetic process"/>
    <property type="evidence" value="ECO:0007669"/>
    <property type="project" value="UniProtKB-UniRule"/>
</dbReference>
<dbReference type="FunFam" id="3.90.226.10:FF:000008">
    <property type="entry name" value="Acetyl-coenzyme A carboxylase carboxyl transferase subunit alpha"/>
    <property type="match status" value="1"/>
</dbReference>
<dbReference type="Gene3D" id="3.90.226.10">
    <property type="entry name" value="2-enoyl-CoA Hydratase, Chain A, domain 1"/>
    <property type="match status" value="1"/>
</dbReference>
<dbReference type="HAMAP" id="MF_00823">
    <property type="entry name" value="AcetylCoA_CT_alpha"/>
    <property type="match status" value="1"/>
</dbReference>
<dbReference type="InterPro" id="IPR001095">
    <property type="entry name" value="Acetyl_CoA_COase_a_su"/>
</dbReference>
<dbReference type="InterPro" id="IPR029045">
    <property type="entry name" value="ClpP/crotonase-like_dom_sf"/>
</dbReference>
<dbReference type="InterPro" id="IPR011763">
    <property type="entry name" value="COA_CT_C"/>
</dbReference>
<dbReference type="NCBIfam" id="TIGR00513">
    <property type="entry name" value="accA"/>
    <property type="match status" value="1"/>
</dbReference>
<dbReference type="NCBIfam" id="NF041504">
    <property type="entry name" value="AccA_sub"/>
    <property type="match status" value="1"/>
</dbReference>
<dbReference type="NCBIfam" id="NF004344">
    <property type="entry name" value="PRK05724.1"/>
    <property type="match status" value="1"/>
</dbReference>
<dbReference type="PANTHER" id="PTHR42853">
    <property type="entry name" value="ACETYL-COENZYME A CARBOXYLASE CARBOXYL TRANSFERASE SUBUNIT ALPHA"/>
    <property type="match status" value="1"/>
</dbReference>
<dbReference type="PANTHER" id="PTHR42853:SF3">
    <property type="entry name" value="ACETYL-COENZYME A CARBOXYLASE CARBOXYL TRANSFERASE SUBUNIT ALPHA, CHLOROPLASTIC"/>
    <property type="match status" value="1"/>
</dbReference>
<dbReference type="Pfam" id="PF03255">
    <property type="entry name" value="ACCA"/>
    <property type="match status" value="1"/>
</dbReference>
<dbReference type="PRINTS" id="PR01069">
    <property type="entry name" value="ACCCTRFRASEA"/>
</dbReference>
<dbReference type="SUPFAM" id="SSF52096">
    <property type="entry name" value="ClpP/crotonase"/>
    <property type="match status" value="1"/>
</dbReference>
<dbReference type="PROSITE" id="PS50989">
    <property type="entry name" value="COA_CT_CTER"/>
    <property type="match status" value="1"/>
</dbReference>